<dbReference type="EMBL" id="BA000022">
    <property type="protein sequence ID" value="BAA17600.1"/>
    <property type="molecule type" value="Genomic_DNA"/>
</dbReference>
<dbReference type="PIR" id="S77266">
    <property type="entry name" value="S77266"/>
</dbReference>
<dbReference type="SMR" id="P73560"/>
<dbReference type="FunCoup" id="P73560">
    <property type="interactions" value="428"/>
</dbReference>
<dbReference type="STRING" id="1148.gene:10498467"/>
<dbReference type="PaxDb" id="1148-1652680"/>
<dbReference type="EnsemblBacteria" id="BAA17600">
    <property type="protein sequence ID" value="BAA17600"/>
    <property type="gene ID" value="BAA17600"/>
</dbReference>
<dbReference type="KEGG" id="syn:slr0879"/>
<dbReference type="eggNOG" id="COG0509">
    <property type="taxonomic scope" value="Bacteria"/>
</dbReference>
<dbReference type="InParanoid" id="P73560"/>
<dbReference type="PhylomeDB" id="P73560"/>
<dbReference type="BioCyc" id="MetaCyc:MONOMER-22027"/>
<dbReference type="Proteomes" id="UP000001425">
    <property type="component" value="Chromosome"/>
</dbReference>
<dbReference type="GO" id="GO:0005960">
    <property type="term" value="C:glycine cleavage complex"/>
    <property type="evidence" value="ECO:0007669"/>
    <property type="project" value="InterPro"/>
</dbReference>
<dbReference type="GO" id="GO:0019464">
    <property type="term" value="P:glycine decarboxylation via glycine cleavage system"/>
    <property type="evidence" value="ECO:0007669"/>
    <property type="project" value="UniProtKB-UniRule"/>
</dbReference>
<dbReference type="CDD" id="cd06848">
    <property type="entry name" value="GCS_H"/>
    <property type="match status" value="1"/>
</dbReference>
<dbReference type="Gene3D" id="2.40.50.100">
    <property type="match status" value="1"/>
</dbReference>
<dbReference type="HAMAP" id="MF_00272">
    <property type="entry name" value="GcvH"/>
    <property type="match status" value="1"/>
</dbReference>
<dbReference type="InterPro" id="IPR003016">
    <property type="entry name" value="2-oxoA_DH_lipoyl-BS"/>
</dbReference>
<dbReference type="InterPro" id="IPR000089">
    <property type="entry name" value="Biotin_lipoyl"/>
</dbReference>
<dbReference type="InterPro" id="IPR002930">
    <property type="entry name" value="GCV_H"/>
</dbReference>
<dbReference type="InterPro" id="IPR033753">
    <property type="entry name" value="GCV_H/Fam206"/>
</dbReference>
<dbReference type="InterPro" id="IPR017453">
    <property type="entry name" value="GCV_H_sub"/>
</dbReference>
<dbReference type="InterPro" id="IPR011053">
    <property type="entry name" value="Single_hybrid_motif"/>
</dbReference>
<dbReference type="NCBIfam" id="TIGR00527">
    <property type="entry name" value="gcvH"/>
    <property type="match status" value="1"/>
</dbReference>
<dbReference type="NCBIfam" id="NF002270">
    <property type="entry name" value="PRK01202.1"/>
    <property type="match status" value="1"/>
</dbReference>
<dbReference type="PANTHER" id="PTHR11715">
    <property type="entry name" value="GLYCINE CLEAVAGE SYSTEM H PROTEIN"/>
    <property type="match status" value="1"/>
</dbReference>
<dbReference type="PANTHER" id="PTHR11715:SF3">
    <property type="entry name" value="GLYCINE CLEAVAGE SYSTEM H PROTEIN-RELATED"/>
    <property type="match status" value="1"/>
</dbReference>
<dbReference type="Pfam" id="PF01597">
    <property type="entry name" value="GCV_H"/>
    <property type="match status" value="1"/>
</dbReference>
<dbReference type="SUPFAM" id="SSF51230">
    <property type="entry name" value="Single hybrid motif"/>
    <property type="match status" value="1"/>
</dbReference>
<dbReference type="PROSITE" id="PS50968">
    <property type="entry name" value="BIOTINYL_LIPOYL"/>
    <property type="match status" value="1"/>
</dbReference>
<dbReference type="PROSITE" id="PS00189">
    <property type="entry name" value="LIPOYL"/>
    <property type="match status" value="1"/>
</dbReference>
<proteinExistence type="inferred from homology"/>
<accession>P73560</accession>
<feature type="chain" id="PRO_0000166257" description="Glycine cleavage system H protein">
    <location>
        <begin position="1"/>
        <end position="132"/>
    </location>
</feature>
<feature type="domain" description="Lipoyl-binding" evidence="2">
    <location>
        <begin position="24"/>
        <end position="107"/>
    </location>
</feature>
<feature type="modified residue" description="N6-lipoyllysine" evidence="1">
    <location>
        <position position="65"/>
    </location>
</feature>
<sequence length="132" mass="14580">MELEHPDDLYYLDSHEYVRFDGETATIGLSAFAVDELGDIVFVELPEEGDKVEFEQSMGAVESVKAASDLYSPVTGTVIEKNSALEDQPELLNQDPYGEEGWLIKVRLDDVEDAKEGLMAAGDYRATLETGD</sequence>
<gene>
    <name evidence="1" type="primary">gcvH</name>
    <name type="ordered locus">slr0879</name>
</gene>
<organism>
    <name type="scientific">Synechocystis sp. (strain ATCC 27184 / PCC 6803 / Kazusa)</name>
    <dbReference type="NCBI Taxonomy" id="1111708"/>
    <lineage>
        <taxon>Bacteria</taxon>
        <taxon>Bacillati</taxon>
        <taxon>Cyanobacteriota</taxon>
        <taxon>Cyanophyceae</taxon>
        <taxon>Synechococcales</taxon>
        <taxon>Merismopediaceae</taxon>
        <taxon>Synechocystis</taxon>
    </lineage>
</organism>
<reference key="1">
    <citation type="journal article" date="1996" name="DNA Res.">
        <title>Sequence analysis of the genome of the unicellular cyanobacterium Synechocystis sp. strain PCC6803. II. Sequence determination of the entire genome and assignment of potential protein-coding regions.</title>
        <authorList>
            <person name="Kaneko T."/>
            <person name="Sato S."/>
            <person name="Kotani H."/>
            <person name="Tanaka A."/>
            <person name="Asamizu E."/>
            <person name="Nakamura Y."/>
            <person name="Miyajima N."/>
            <person name="Hirosawa M."/>
            <person name="Sugiura M."/>
            <person name="Sasamoto S."/>
            <person name="Kimura T."/>
            <person name="Hosouchi T."/>
            <person name="Matsuno A."/>
            <person name="Muraki A."/>
            <person name="Nakazaki N."/>
            <person name="Naruo K."/>
            <person name="Okumura S."/>
            <person name="Shimpo S."/>
            <person name="Takeuchi C."/>
            <person name="Wada T."/>
            <person name="Watanabe A."/>
            <person name="Yamada M."/>
            <person name="Yasuda M."/>
            <person name="Tabata S."/>
        </authorList>
    </citation>
    <scope>NUCLEOTIDE SEQUENCE [LARGE SCALE GENOMIC DNA]</scope>
    <source>
        <strain>ATCC 27184 / PCC 6803 / Kazusa</strain>
    </source>
</reference>
<protein>
    <recommendedName>
        <fullName evidence="1">Glycine cleavage system H protein</fullName>
    </recommendedName>
</protein>
<evidence type="ECO:0000255" key="1">
    <source>
        <dbReference type="HAMAP-Rule" id="MF_00272"/>
    </source>
</evidence>
<evidence type="ECO:0000255" key="2">
    <source>
        <dbReference type="PROSITE-ProRule" id="PRU01066"/>
    </source>
</evidence>
<comment type="function">
    <text evidence="1">The glycine cleavage system catalyzes the degradation of glycine. The H protein shuttles the methylamine group of glycine from the P protein to the T protein.</text>
</comment>
<comment type="cofactor">
    <cofactor evidence="1">
        <name>(R)-lipoate</name>
        <dbReference type="ChEBI" id="CHEBI:83088"/>
    </cofactor>
    <text evidence="1">Binds 1 lipoyl cofactor covalently.</text>
</comment>
<comment type="subunit">
    <text evidence="1">The glycine cleavage system is composed of four proteins: P, T, L and H.</text>
</comment>
<comment type="similarity">
    <text evidence="1">Belongs to the GcvH family.</text>
</comment>
<name>GCSH_SYNY3</name>
<keyword id="KW-0450">Lipoyl</keyword>
<keyword id="KW-1185">Reference proteome</keyword>